<gene>
    <name type="primary">HUS1</name>
</gene>
<feature type="chain" id="PRO_0000225003" description="Checkpoint protein HUS1">
    <location>
        <begin position="1"/>
        <end position="280"/>
    </location>
</feature>
<feature type="splice variant" id="VSP_056702" description="In isoform 2." evidence="18">
    <location>
        <begin position="1"/>
        <end position="21"/>
    </location>
</feature>
<feature type="sequence variant" id="VAR_033999" description="In dbSNP:rs2307261.">
    <original>S</original>
    <variation>G</variation>
    <location>
        <position position="126"/>
    </location>
</feature>
<feature type="sequence variant" id="VAR_025414" description="In dbSNP:rs2307254." evidence="17">
    <original>Q</original>
    <variation>K</variation>
    <location>
        <position position="147"/>
    </location>
</feature>
<feature type="sequence variant" id="VAR_025415" description="In dbSNP:rs3176588." evidence="17">
    <original>D</original>
    <variation>E</variation>
    <location>
        <position position="221"/>
    </location>
</feature>
<feature type="strand" evidence="25">
    <location>
        <begin position="2"/>
        <end position="7"/>
    </location>
</feature>
<feature type="helix" evidence="25">
    <location>
        <begin position="10"/>
        <end position="26"/>
    </location>
</feature>
<feature type="strand" evidence="25">
    <location>
        <begin position="28"/>
        <end position="34"/>
    </location>
</feature>
<feature type="strand" evidence="25">
    <location>
        <begin position="36"/>
        <end position="44"/>
    </location>
</feature>
<feature type="strand" evidence="23">
    <location>
        <begin position="46"/>
        <end position="48"/>
    </location>
</feature>
<feature type="strand" evidence="25">
    <location>
        <begin position="53"/>
        <end position="59"/>
    </location>
</feature>
<feature type="helix" evidence="25">
    <location>
        <begin position="60"/>
        <end position="62"/>
    </location>
</feature>
<feature type="strand" evidence="25">
    <location>
        <begin position="65"/>
        <end position="70"/>
    </location>
</feature>
<feature type="strand" evidence="25">
    <location>
        <begin position="72"/>
        <end position="74"/>
    </location>
</feature>
<feature type="strand" evidence="25">
    <location>
        <begin position="79"/>
        <end position="84"/>
    </location>
</feature>
<feature type="helix" evidence="25">
    <location>
        <begin position="85"/>
        <end position="95"/>
    </location>
</feature>
<feature type="strand" evidence="25">
    <location>
        <begin position="99"/>
        <end position="119"/>
    </location>
</feature>
<feature type="strand" evidence="22">
    <location>
        <begin position="122"/>
        <end position="124"/>
    </location>
</feature>
<feature type="strand" evidence="25">
    <location>
        <begin position="127"/>
        <end position="134"/>
    </location>
</feature>
<feature type="strand" evidence="23">
    <location>
        <begin position="135"/>
        <end position="137"/>
    </location>
</feature>
<feature type="helix" evidence="25">
    <location>
        <begin position="140"/>
        <end position="146"/>
    </location>
</feature>
<feature type="strand" evidence="25">
    <location>
        <begin position="155"/>
        <end position="159"/>
    </location>
</feature>
<feature type="helix" evidence="25">
    <location>
        <begin position="163"/>
        <end position="174"/>
    </location>
</feature>
<feature type="strand" evidence="25">
    <location>
        <begin position="178"/>
        <end position="184"/>
    </location>
</feature>
<feature type="strand" evidence="24">
    <location>
        <begin position="186"/>
        <end position="188"/>
    </location>
</feature>
<feature type="strand" evidence="25">
    <location>
        <begin position="190"/>
        <end position="195"/>
    </location>
</feature>
<feature type="strand" evidence="25">
    <location>
        <begin position="197"/>
        <end position="205"/>
    </location>
</feature>
<feature type="strand" evidence="23">
    <location>
        <begin position="216"/>
        <end position="220"/>
    </location>
</feature>
<feature type="strand" evidence="25">
    <location>
        <begin position="228"/>
        <end position="233"/>
    </location>
</feature>
<feature type="helix" evidence="25">
    <location>
        <begin position="234"/>
        <end position="242"/>
    </location>
</feature>
<feature type="strand" evidence="25">
    <location>
        <begin position="249"/>
        <end position="256"/>
    </location>
</feature>
<feature type="turn" evidence="25">
    <location>
        <begin position="257"/>
        <end position="259"/>
    </location>
</feature>
<feature type="strand" evidence="25">
    <location>
        <begin position="260"/>
        <end position="267"/>
    </location>
</feature>
<feature type="strand" evidence="25">
    <location>
        <begin position="270"/>
        <end position="277"/>
    </location>
</feature>
<name>HUS1_HUMAN</name>
<comment type="function">
    <text evidence="15">Component of the 9-1-1 cell-cycle checkpoint response complex that plays a major role in DNA repair (PubMed:21659603). The 9-1-1 complex is recruited to DNA lesion upon damage by the RAD17-replication factor C (RFC) clamp loader complex (PubMed:21659603). Acts then as a sliding clamp platform on DNA for several proteins involved in long-patch base excision repair (LP-BER) (PubMed:21659603). The 9-1-1 complex stimulates DNA polymerase beta (POLB) activity by increasing its affinity for the 3'-OH end of the primer-template and stabilizes POLB to those sites where LP-BER proceeds; endonuclease FEN1 cleavage activity on substrates with double, nick, or gap flaps of distinct sequences and lengths; and DNA ligase I (LIG1) on long-patch base excision repair substrates (PubMed:21659603). The 9-1-1 complex is necessary for the recruitment of RHNO1 to sites of double-stranded breaks (DSB) occurring during the S phase (PubMed:21659603).</text>
</comment>
<comment type="subunit">
    <text evidence="1 2 3 4 5 6 7 8 9 10 11 12 13 14 16">Component of the toroidal 9-1-1 (RAD9-RAD1-HUS1) complex, composed of RAD9A, RAD1 and HUS1 (PubMed:10359610, PubMed:10777662, PubMed:10846170, PubMed:10884395, PubMed:15314187, PubMed:15556996, PubMed:15871698, PubMed:15897895, PubMed:31776186). The 9-1-1 complex associates with LIG1, POLB, FEN1, RAD17, HDAC1, RPA1 and RPA2 (PubMed:10884395, PubMed:15314187, PubMed:15556996, PubMed:15897895, PubMed:16216273). The 9-1-1 complex associates with the RAD17-RFC complex (PubMed:12578958). HUS1 interacts with POLB, HDAC1, FEN1, PCNA and RAD9B (PubMed:11077446, PubMed:14500360, PubMed:14611806). HUS1 does not interact with RAD17 (PubMed:12578958). Interacts with DNAJC7 (PubMed:11573955).</text>
</comment>
<comment type="interaction">
    <interactant intactId="EBI-1056174">
        <id>O60921</id>
    </interactant>
    <interactant intactId="EBI-6657981">
        <id>Q504U0</id>
        <label>C4orf46</label>
    </interactant>
    <organismsDiffer>false</organismsDiffer>
    <experiments>6</experiments>
</comment>
<comment type="interaction">
    <interactant intactId="EBI-1056174">
        <id>O60921</id>
    </interactant>
    <interactant intactId="EBI-3924013">
        <id>Q9BTE7</id>
        <label>DCUN1D5</label>
    </interactant>
    <organismsDiffer>false</organismsDiffer>
    <experiments>5</experiments>
</comment>
<comment type="interaction">
    <interactant intactId="EBI-1056174">
        <id>O60921</id>
    </interactant>
    <interactant intactId="EBI-12193965">
        <id>Q9Y3R0-3</id>
        <label>GRIP1</label>
    </interactant>
    <organismsDiffer>false</organismsDiffer>
    <experiments>3</experiments>
</comment>
<comment type="interaction">
    <interactant intactId="EBI-1056174">
        <id>O60921</id>
    </interactant>
    <interactant intactId="EBI-741158">
        <id>Q96HA8</id>
        <label>NTAQ1</label>
    </interactant>
    <organismsDiffer>false</organismsDiffer>
    <experiments>3</experiments>
</comment>
<comment type="interaction">
    <interactant intactId="EBI-1056174">
        <id>O60921</id>
    </interactant>
    <interactant intactId="EBI-721835">
        <id>O60671</id>
        <label>RAD1</label>
    </interactant>
    <organismsDiffer>false</organismsDiffer>
    <experiments>9</experiments>
</comment>
<comment type="interaction">
    <interactant intactId="EBI-1056174">
        <id>O60921</id>
    </interactant>
    <interactant intactId="EBI-2606224">
        <id>Q99638</id>
        <label>RAD9A</label>
    </interactant>
    <organismsDiffer>false</organismsDiffer>
    <experiments>17</experiments>
</comment>
<comment type="interaction">
    <interactant intactId="EBI-1056174">
        <id>O60921</id>
    </interactant>
    <interactant intactId="EBI-727004">
        <id>O00560</id>
        <label>SDCBP</label>
    </interactant>
    <organismsDiffer>false</organismsDiffer>
    <experiments>3</experiments>
</comment>
<comment type="subcellular location">
    <subcellularLocation>
        <location evidence="3 5">Nucleus</location>
    </subcellularLocation>
    <subcellularLocation>
        <location evidence="5">Cytoplasm</location>
        <location evidence="5">Cytosol</location>
    </subcellularLocation>
    <text evidence="5">In discrete nuclear foci upon DNA damage (PubMed:11077446). According to PubMed:11077446, localized also in the cytoplasm (PubMed:11077446). DNA damage induces its nuclear translocation (PubMed:11077446). Shuttles between the nucleus and the cytoplasm (PubMed:11077446).</text>
</comment>
<comment type="alternative products">
    <event type="alternative splicing"/>
    <isoform>
        <id>O60921-1</id>
        <name>1</name>
        <sequence type="displayed"/>
    </isoform>
    <isoform>
        <id>O60921-2</id>
        <name>2</name>
        <sequence type="described" ref="VSP_056702"/>
    </isoform>
</comment>
<comment type="tissue specificity">
    <text evidence="2">Ubiquitous.</text>
</comment>
<comment type="similarity">
    <text evidence="19">Belongs to the HUS1 family.</text>
</comment>
<comment type="online information" name="Atlas of Genetics and Cytogenetics in Oncology and Haematology">
    <link uri="https://atlasgeneticsoncology.org/gene/40899/HUS1"/>
</comment>
<evidence type="ECO:0000269" key="1">
    <source>
    </source>
</evidence>
<evidence type="ECO:0000269" key="2">
    <source>
    </source>
</evidence>
<evidence type="ECO:0000269" key="3">
    <source>
    </source>
</evidence>
<evidence type="ECO:0000269" key="4">
    <source>
    </source>
</evidence>
<evidence type="ECO:0000269" key="5">
    <source>
    </source>
</evidence>
<evidence type="ECO:0000269" key="6">
    <source>
    </source>
</evidence>
<evidence type="ECO:0000269" key="7">
    <source>
    </source>
</evidence>
<evidence type="ECO:0000269" key="8">
    <source>
    </source>
</evidence>
<evidence type="ECO:0000269" key="9">
    <source>
    </source>
</evidence>
<evidence type="ECO:0000269" key="10">
    <source>
    </source>
</evidence>
<evidence type="ECO:0000269" key="11">
    <source>
    </source>
</evidence>
<evidence type="ECO:0000269" key="12">
    <source>
    </source>
</evidence>
<evidence type="ECO:0000269" key="13">
    <source>
    </source>
</evidence>
<evidence type="ECO:0000269" key="14">
    <source>
    </source>
</evidence>
<evidence type="ECO:0000269" key="15">
    <source>
    </source>
</evidence>
<evidence type="ECO:0000269" key="16">
    <source>
    </source>
</evidence>
<evidence type="ECO:0000269" key="17">
    <source ref="7"/>
</evidence>
<evidence type="ECO:0000303" key="18">
    <source>
    </source>
</evidence>
<evidence type="ECO:0000305" key="19"/>
<evidence type="ECO:0007744" key="20">
    <source>
        <dbReference type="PDB" id="6J8Y"/>
    </source>
</evidence>
<evidence type="ECO:0007744" key="21">
    <source>
        <dbReference type="PDB" id="8GNN"/>
    </source>
</evidence>
<evidence type="ECO:0007829" key="22">
    <source>
        <dbReference type="PDB" id="3A1J"/>
    </source>
</evidence>
<evidence type="ECO:0007829" key="23">
    <source>
        <dbReference type="PDB" id="3GGR"/>
    </source>
</evidence>
<evidence type="ECO:0007829" key="24">
    <source>
        <dbReference type="PDB" id="6J8Y"/>
    </source>
</evidence>
<evidence type="ECO:0007829" key="25">
    <source>
        <dbReference type="PDB" id="8GNN"/>
    </source>
</evidence>
<dbReference type="EMBL" id="Y16893">
    <property type="protein sequence ID" value="CAA76518.1"/>
    <property type="molecule type" value="mRNA"/>
</dbReference>
<dbReference type="EMBL" id="AF076844">
    <property type="protein sequence ID" value="AAC95526.1"/>
    <property type="molecule type" value="mRNA"/>
</dbReference>
<dbReference type="EMBL" id="AF110393">
    <property type="protein sequence ID" value="AAD25350.1"/>
    <property type="molecule type" value="mRNA"/>
</dbReference>
<dbReference type="EMBL" id="AK294117">
    <property type="protein sequence ID" value="BAG57450.1"/>
    <property type="molecule type" value="mRNA"/>
</dbReference>
<dbReference type="EMBL" id="AC019066">
    <property type="status" value="NOT_ANNOTATED_CDS"/>
    <property type="molecule type" value="Genomic_DNA"/>
</dbReference>
<dbReference type="EMBL" id="AC069282">
    <property type="status" value="NOT_ANNOTATED_CDS"/>
    <property type="molecule type" value="Genomic_DNA"/>
</dbReference>
<dbReference type="EMBL" id="AC104696">
    <property type="status" value="NOT_ANNOTATED_CDS"/>
    <property type="molecule type" value="Genomic_DNA"/>
</dbReference>
<dbReference type="EMBL" id="CR536552">
    <property type="protein sequence ID" value="CAG38789.1"/>
    <property type="molecule type" value="mRNA"/>
</dbReference>
<dbReference type="EMBL" id="BT019481">
    <property type="protein sequence ID" value="AAV38288.1"/>
    <property type="molecule type" value="mRNA"/>
</dbReference>
<dbReference type="EMBL" id="BT019482">
    <property type="protein sequence ID" value="AAV38289.1"/>
    <property type="molecule type" value="mRNA"/>
</dbReference>
<dbReference type="EMBL" id="AF503165">
    <property type="protein sequence ID" value="AAM18968.1"/>
    <property type="molecule type" value="Genomic_DNA"/>
</dbReference>
<dbReference type="EMBL" id="BC007013">
    <property type="protein sequence ID" value="AAH07013.1"/>
    <property type="molecule type" value="mRNA"/>
</dbReference>
<dbReference type="CCDS" id="CCDS34635.1">
    <molecule id="O60921-1"/>
</dbReference>
<dbReference type="CCDS" id="CCDS87501.1">
    <molecule id="O60921-2"/>
</dbReference>
<dbReference type="RefSeq" id="NP_001350612.1">
    <molecule id="O60921-2"/>
    <property type="nucleotide sequence ID" value="NM_001363683.2"/>
</dbReference>
<dbReference type="RefSeq" id="NP_004498.1">
    <molecule id="O60921-1"/>
    <property type="nucleotide sequence ID" value="NM_004507.4"/>
</dbReference>
<dbReference type="RefSeq" id="XP_016867604.1">
    <property type="nucleotide sequence ID" value="XM_017012115.1"/>
</dbReference>
<dbReference type="PDB" id="3A1J">
    <property type="method" value="X-ray"/>
    <property type="resolution" value="2.50 A"/>
    <property type="chains" value="B=1-280"/>
</dbReference>
<dbReference type="PDB" id="3G65">
    <property type="method" value="X-ray"/>
    <property type="resolution" value="2.90 A"/>
    <property type="chains" value="C=1-280"/>
</dbReference>
<dbReference type="PDB" id="3GGR">
    <property type="method" value="X-ray"/>
    <property type="resolution" value="3.20 A"/>
    <property type="chains" value="B=2-280"/>
</dbReference>
<dbReference type="PDB" id="6J8Y">
    <property type="method" value="X-ray"/>
    <property type="resolution" value="2.40 A"/>
    <property type="chains" value="B=2-280"/>
</dbReference>
<dbReference type="PDB" id="7Z6H">
    <property type="method" value="EM"/>
    <property type="resolution" value="3.59 A"/>
    <property type="chains" value="C=1-280"/>
</dbReference>
<dbReference type="PDB" id="8GNN">
    <property type="method" value="X-ray"/>
    <property type="resolution" value="2.12 A"/>
    <property type="chains" value="B=2-280"/>
</dbReference>
<dbReference type="PDB" id="8WU8">
    <property type="method" value="X-ray"/>
    <property type="resolution" value="2.81 A"/>
    <property type="chains" value="B=2-280"/>
</dbReference>
<dbReference type="PDBsum" id="3A1J"/>
<dbReference type="PDBsum" id="3G65"/>
<dbReference type="PDBsum" id="3GGR"/>
<dbReference type="PDBsum" id="6J8Y"/>
<dbReference type="PDBsum" id="7Z6H"/>
<dbReference type="PDBsum" id="8GNN"/>
<dbReference type="PDBsum" id="8WU8"/>
<dbReference type="EMDB" id="EMD-14527"/>
<dbReference type="SMR" id="O60921"/>
<dbReference type="BioGRID" id="109596">
    <property type="interactions" value="122"/>
</dbReference>
<dbReference type="ComplexPortal" id="CPX-1829">
    <property type="entry name" value="Checkpoint clamp complex"/>
</dbReference>
<dbReference type="CORUM" id="O60921"/>
<dbReference type="DIP" id="DIP-40929N"/>
<dbReference type="FunCoup" id="O60921">
    <property type="interactions" value="2918"/>
</dbReference>
<dbReference type="IntAct" id="O60921">
    <property type="interactions" value="36"/>
</dbReference>
<dbReference type="MINT" id="O60921"/>
<dbReference type="STRING" id="9606.ENSP00000258774"/>
<dbReference type="iPTMnet" id="O60921"/>
<dbReference type="PhosphoSitePlus" id="O60921"/>
<dbReference type="BioMuta" id="HUS1"/>
<dbReference type="jPOST" id="O60921"/>
<dbReference type="MassIVE" id="O60921"/>
<dbReference type="PaxDb" id="9606-ENSP00000258774"/>
<dbReference type="PeptideAtlas" id="O60921"/>
<dbReference type="ProteomicsDB" id="4044"/>
<dbReference type="ProteomicsDB" id="49670">
    <molecule id="O60921-1"/>
</dbReference>
<dbReference type="Pumba" id="O60921"/>
<dbReference type="TopDownProteomics" id="O60921-1">
    <molecule id="O60921-1"/>
</dbReference>
<dbReference type="Antibodypedia" id="27543">
    <property type="antibodies" value="257 antibodies from 30 providers"/>
</dbReference>
<dbReference type="CPTC" id="O60921">
    <property type="antibodies" value="1 antibody"/>
</dbReference>
<dbReference type="DNASU" id="3364"/>
<dbReference type="Ensembl" id="ENST00000258774.10">
    <molecule id="O60921-1"/>
    <property type="protein sequence ID" value="ENSP00000258774.5"/>
    <property type="gene ID" value="ENSG00000136273.14"/>
</dbReference>
<dbReference type="Ensembl" id="ENST00000432325.6">
    <molecule id="O60921-2"/>
    <property type="protein sequence ID" value="ENSP00000416588.1"/>
    <property type="gene ID" value="ENSG00000136273.14"/>
</dbReference>
<dbReference type="Ensembl" id="ENST00000458191.5">
    <molecule id="O60921-2"/>
    <property type="protein sequence ID" value="ENSP00000400727.1"/>
    <property type="gene ID" value="ENSG00000136273.14"/>
</dbReference>
<dbReference type="GeneID" id="3364"/>
<dbReference type="KEGG" id="hsa:3364"/>
<dbReference type="MANE-Select" id="ENST00000258774.10">
    <property type="protein sequence ID" value="ENSP00000258774.5"/>
    <property type="RefSeq nucleotide sequence ID" value="NM_004507.4"/>
    <property type="RefSeq protein sequence ID" value="NP_004498.1"/>
</dbReference>
<dbReference type="UCSC" id="uc003tod.3">
    <molecule id="O60921-1"/>
    <property type="organism name" value="human"/>
</dbReference>
<dbReference type="AGR" id="HGNC:5309"/>
<dbReference type="CTD" id="3364"/>
<dbReference type="DisGeNET" id="3364"/>
<dbReference type="GeneCards" id="HUS1"/>
<dbReference type="HGNC" id="HGNC:5309">
    <property type="gene designation" value="HUS1"/>
</dbReference>
<dbReference type="HPA" id="ENSG00000136273">
    <property type="expression patterns" value="Low tissue specificity"/>
</dbReference>
<dbReference type="MIM" id="603760">
    <property type="type" value="gene"/>
</dbReference>
<dbReference type="neXtProt" id="NX_O60921"/>
<dbReference type="OpenTargets" id="ENSG00000136273"/>
<dbReference type="PharmGKB" id="PA29564"/>
<dbReference type="VEuPathDB" id="HostDB:ENSG00000136273"/>
<dbReference type="eggNOG" id="KOG3999">
    <property type="taxonomic scope" value="Eukaryota"/>
</dbReference>
<dbReference type="GeneTree" id="ENSGT00390000000706"/>
<dbReference type="HOGENOM" id="CLU_035754_1_0_1"/>
<dbReference type="InParanoid" id="O60921"/>
<dbReference type="OMA" id="VCWMRLE"/>
<dbReference type="OrthoDB" id="10063861at2759"/>
<dbReference type="PAN-GO" id="O60921">
    <property type="GO annotations" value="8 GO annotations based on evolutionary models"/>
</dbReference>
<dbReference type="PhylomeDB" id="O60921"/>
<dbReference type="TreeFam" id="TF314491"/>
<dbReference type="BRENDA" id="2.3.2.27">
    <property type="organism ID" value="2681"/>
</dbReference>
<dbReference type="PathwayCommons" id="O60921"/>
<dbReference type="Reactome" id="R-HSA-176187">
    <property type="pathway name" value="Activation of ATR in response to replication stress"/>
</dbReference>
<dbReference type="Reactome" id="R-HSA-5685938">
    <property type="pathway name" value="HDR through Single Strand Annealing (SSA)"/>
</dbReference>
<dbReference type="Reactome" id="R-HSA-5693607">
    <property type="pathway name" value="Processing of DNA double-strand break ends"/>
</dbReference>
<dbReference type="Reactome" id="R-HSA-5693616">
    <property type="pathway name" value="Presynaptic phase of homologous DNA pairing and strand exchange"/>
</dbReference>
<dbReference type="Reactome" id="R-HSA-6804756">
    <property type="pathway name" value="Regulation of TP53 Activity through Phosphorylation"/>
</dbReference>
<dbReference type="Reactome" id="R-HSA-69473">
    <property type="pathway name" value="G2/M DNA damage checkpoint"/>
</dbReference>
<dbReference type="Reactome" id="R-HSA-9709570">
    <property type="pathway name" value="Impaired BRCA2 binding to RAD51"/>
</dbReference>
<dbReference type="SignaLink" id="O60921"/>
<dbReference type="BioGRID-ORCS" id="3364">
    <property type="hits" value="473 hits in 1177 CRISPR screens"/>
</dbReference>
<dbReference type="ChiTaRS" id="HUS1">
    <property type="organism name" value="human"/>
</dbReference>
<dbReference type="EvolutionaryTrace" id="O60921"/>
<dbReference type="GeneWiki" id="HUS1"/>
<dbReference type="GenomeRNAi" id="3364"/>
<dbReference type="Pharos" id="O60921">
    <property type="development level" value="Tbio"/>
</dbReference>
<dbReference type="PRO" id="PR:O60921"/>
<dbReference type="Proteomes" id="UP000005640">
    <property type="component" value="Chromosome 7"/>
</dbReference>
<dbReference type="RNAct" id="O60921">
    <property type="molecule type" value="protein"/>
</dbReference>
<dbReference type="Bgee" id="ENSG00000136273">
    <property type="expression patterns" value="Expressed in primordial germ cell in gonad and 182 other cell types or tissues"/>
</dbReference>
<dbReference type="ExpressionAtlas" id="O60921">
    <property type="expression patterns" value="baseline and differential"/>
</dbReference>
<dbReference type="GO" id="GO:0030896">
    <property type="term" value="C:checkpoint clamp complex"/>
    <property type="evidence" value="ECO:0000314"/>
    <property type="project" value="UniProtKB"/>
</dbReference>
<dbReference type="GO" id="GO:0005829">
    <property type="term" value="C:cytosol"/>
    <property type="evidence" value="ECO:0007669"/>
    <property type="project" value="UniProtKB-SubCell"/>
</dbReference>
<dbReference type="GO" id="GO:0005730">
    <property type="term" value="C:nucleolus"/>
    <property type="evidence" value="ECO:0007669"/>
    <property type="project" value="InterPro"/>
</dbReference>
<dbReference type="GO" id="GO:0005654">
    <property type="term" value="C:nucleoplasm"/>
    <property type="evidence" value="ECO:0000304"/>
    <property type="project" value="Reactome"/>
</dbReference>
<dbReference type="GO" id="GO:0005634">
    <property type="term" value="C:nucleus"/>
    <property type="evidence" value="ECO:0000314"/>
    <property type="project" value="UniProtKB"/>
</dbReference>
<dbReference type="GO" id="GO:0035861">
    <property type="term" value="C:site of double-strand break"/>
    <property type="evidence" value="ECO:0000318"/>
    <property type="project" value="GO_Central"/>
</dbReference>
<dbReference type="GO" id="GO:0071479">
    <property type="term" value="P:cellular response to ionizing radiation"/>
    <property type="evidence" value="ECO:0000314"/>
    <property type="project" value="UniProtKB"/>
</dbReference>
<dbReference type="GO" id="GO:0000077">
    <property type="term" value="P:DNA damage checkpoint signaling"/>
    <property type="evidence" value="ECO:0000315"/>
    <property type="project" value="UniProtKB"/>
</dbReference>
<dbReference type="GO" id="GO:0006974">
    <property type="term" value="P:DNA damage response"/>
    <property type="evidence" value="ECO:0000304"/>
    <property type="project" value="ProtInc"/>
</dbReference>
<dbReference type="GO" id="GO:0006281">
    <property type="term" value="P:DNA repair"/>
    <property type="evidence" value="ECO:0000304"/>
    <property type="project" value="ProtInc"/>
</dbReference>
<dbReference type="GO" id="GO:0000724">
    <property type="term" value="P:double-strand break repair via homologous recombination"/>
    <property type="evidence" value="ECO:0000318"/>
    <property type="project" value="GO_Central"/>
</dbReference>
<dbReference type="GO" id="GO:0009792">
    <property type="term" value="P:embryo development ending in birth or egg hatching"/>
    <property type="evidence" value="ECO:0007669"/>
    <property type="project" value="Ensembl"/>
</dbReference>
<dbReference type="GO" id="GO:0044778">
    <property type="term" value="P:meiotic DNA integrity checkpoint signaling"/>
    <property type="evidence" value="ECO:0000318"/>
    <property type="project" value="GO_Central"/>
</dbReference>
<dbReference type="GO" id="GO:0033314">
    <property type="term" value="P:mitotic DNA replication checkpoint signaling"/>
    <property type="evidence" value="ECO:0000318"/>
    <property type="project" value="GO_Central"/>
</dbReference>
<dbReference type="GO" id="GO:0031573">
    <property type="term" value="P:mitotic intra-S DNA damage checkpoint signaling"/>
    <property type="evidence" value="ECO:0000318"/>
    <property type="project" value="GO_Central"/>
</dbReference>
<dbReference type="GO" id="GO:0006289">
    <property type="term" value="P:nucleotide-excision repair"/>
    <property type="evidence" value="ECO:0000318"/>
    <property type="project" value="GO_Central"/>
</dbReference>
<dbReference type="GO" id="GO:0009411">
    <property type="term" value="P:response to UV"/>
    <property type="evidence" value="ECO:0007669"/>
    <property type="project" value="Ensembl"/>
</dbReference>
<dbReference type="GO" id="GO:0000723">
    <property type="term" value="P:telomere maintenance"/>
    <property type="evidence" value="ECO:0000318"/>
    <property type="project" value="GO_Central"/>
</dbReference>
<dbReference type="FunFam" id="3.70.10.10:FF:000006">
    <property type="entry name" value="Checkpoint protein"/>
    <property type="match status" value="1"/>
</dbReference>
<dbReference type="Gene3D" id="3.70.10.10">
    <property type="match status" value="1"/>
</dbReference>
<dbReference type="InterPro" id="IPR016580">
    <property type="entry name" value="Cell_cycle_HUS1"/>
</dbReference>
<dbReference type="InterPro" id="IPR046938">
    <property type="entry name" value="DNA_clamp_sf"/>
</dbReference>
<dbReference type="InterPro" id="IPR007150">
    <property type="entry name" value="Hus1/Mec3"/>
</dbReference>
<dbReference type="PANTHER" id="PTHR12900:SF4">
    <property type="entry name" value="CHECKPOINT PROTEIN HUS1"/>
    <property type="match status" value="1"/>
</dbReference>
<dbReference type="PANTHER" id="PTHR12900">
    <property type="entry name" value="MITOTIC AND DNA DAMAGE CHECKPOINT PROTEIN HUS1"/>
    <property type="match status" value="1"/>
</dbReference>
<dbReference type="Pfam" id="PF04005">
    <property type="entry name" value="Hus1"/>
    <property type="match status" value="1"/>
</dbReference>
<dbReference type="PIRSF" id="PIRSF011312">
    <property type="entry name" value="Cell_cycle_HUS1"/>
    <property type="match status" value="1"/>
</dbReference>
<dbReference type="SUPFAM" id="SSF55979">
    <property type="entry name" value="DNA clamp"/>
    <property type="match status" value="1"/>
</dbReference>
<proteinExistence type="evidence at protein level"/>
<organism>
    <name type="scientific">Homo sapiens</name>
    <name type="common">Human</name>
    <dbReference type="NCBI Taxonomy" id="9606"/>
    <lineage>
        <taxon>Eukaryota</taxon>
        <taxon>Metazoa</taxon>
        <taxon>Chordata</taxon>
        <taxon>Craniata</taxon>
        <taxon>Vertebrata</taxon>
        <taxon>Euteleostomi</taxon>
        <taxon>Mammalia</taxon>
        <taxon>Eutheria</taxon>
        <taxon>Euarchontoglires</taxon>
        <taxon>Primates</taxon>
        <taxon>Haplorrhini</taxon>
        <taxon>Catarrhini</taxon>
        <taxon>Hominidae</taxon>
        <taxon>Homo</taxon>
    </lineage>
</organism>
<keyword id="KW-0002">3D-structure</keyword>
<keyword id="KW-0025">Alternative splicing</keyword>
<keyword id="KW-0963">Cytoplasm</keyword>
<keyword id="KW-0227">DNA damage</keyword>
<keyword id="KW-0539">Nucleus</keyword>
<keyword id="KW-1267">Proteomics identification</keyword>
<keyword id="KW-1185">Reference proteome</keyword>
<sequence>MKFRAKIVDGACLNHFTRISNMIAKLAKTCTLRISPDKLNFILCDKLANGGVSMWCELEQENFFNEFQMEGVSAENNEIYLELTSENLSRALKTAQNARALKIKLTNKHFPCLTVSVELLSMSSSSRIVTHDIPIKVIPRKLWKDLQEPVVPDPDVSIYLPVLKTMKSVVEKMKNISNHLVIEANLDGELNLKIETELVCVTTHFKDLGNPPLASESTHEDRNVEHMAEVHIDIRKLLQFLAGQQVNPTKALCNIVNNKMVHFDLLHEDVSLQYFIPALS</sequence>
<reference key="1">
    <citation type="journal article" date="1998" name="EMBO J.">
        <title>Hus1p, a conserved fission yeast checkpoint protein, interacts with Rad1p and is phosphorylated in response to DNA damage.</title>
        <authorList>
            <person name="Kostrub C.F."/>
            <person name="Knudsen K."/>
            <person name="Subramani S."/>
            <person name="Enoch T."/>
        </authorList>
    </citation>
    <scope>NUCLEOTIDE SEQUENCE [MRNA] (ISOFORM 1)</scope>
</reference>
<reference key="2">
    <citation type="journal article" date="1998" name="Genomics">
        <title>cDNA cloning and gene mapping of human homologs for Schizosaccharomyces pombe rad17, rad1, and hus1 and cloning of homologs from mouse, Caenorhabditis elegans, and Drosophila melanogaster.</title>
        <authorList>
            <person name="Dean F.B."/>
            <person name="Lian L."/>
            <person name="O'Donnell M."/>
        </authorList>
    </citation>
    <scope>NUCLEOTIDE SEQUENCE [MRNA] (ISOFORM 1)</scope>
</reference>
<reference key="3">
    <citation type="journal article" date="2000" name="Genomics">
        <title>Physical interaction among human checkpoint control proteins HUS1p, RAD1p, and RAD9p, and implications for the regulation of cell cycle progression.</title>
        <authorList>
            <person name="Hang H."/>
            <person name="Lieberman H.B."/>
        </authorList>
    </citation>
    <scope>NUCLEOTIDE SEQUENCE [MRNA] (ISOFORM 1)</scope>
    <scope>INTERACTION WITH RAD1 AND RAD9A</scope>
    <scope>TISSUE SPECIFICITY</scope>
    <source>
        <tissue>T-cell</tissue>
    </source>
</reference>
<reference key="4">
    <citation type="journal article" date="2004" name="Nat. Genet.">
        <title>Complete sequencing and characterization of 21,243 full-length human cDNAs.</title>
        <authorList>
            <person name="Ota T."/>
            <person name="Suzuki Y."/>
            <person name="Nishikawa T."/>
            <person name="Otsuki T."/>
            <person name="Sugiyama T."/>
            <person name="Irie R."/>
            <person name="Wakamatsu A."/>
            <person name="Hayashi K."/>
            <person name="Sato H."/>
            <person name="Nagai K."/>
            <person name="Kimura K."/>
            <person name="Makita H."/>
            <person name="Sekine M."/>
            <person name="Obayashi M."/>
            <person name="Nishi T."/>
            <person name="Shibahara T."/>
            <person name="Tanaka T."/>
            <person name="Ishii S."/>
            <person name="Yamamoto J."/>
            <person name="Saito K."/>
            <person name="Kawai Y."/>
            <person name="Isono Y."/>
            <person name="Nakamura Y."/>
            <person name="Nagahari K."/>
            <person name="Murakami K."/>
            <person name="Yasuda T."/>
            <person name="Iwayanagi T."/>
            <person name="Wagatsuma M."/>
            <person name="Shiratori A."/>
            <person name="Sudo H."/>
            <person name="Hosoiri T."/>
            <person name="Kaku Y."/>
            <person name="Kodaira H."/>
            <person name="Kondo H."/>
            <person name="Sugawara M."/>
            <person name="Takahashi M."/>
            <person name="Kanda K."/>
            <person name="Yokoi T."/>
            <person name="Furuya T."/>
            <person name="Kikkawa E."/>
            <person name="Omura Y."/>
            <person name="Abe K."/>
            <person name="Kamihara K."/>
            <person name="Katsuta N."/>
            <person name="Sato K."/>
            <person name="Tanikawa M."/>
            <person name="Yamazaki M."/>
            <person name="Ninomiya K."/>
            <person name="Ishibashi T."/>
            <person name="Yamashita H."/>
            <person name="Murakawa K."/>
            <person name="Fujimori K."/>
            <person name="Tanai H."/>
            <person name="Kimata M."/>
            <person name="Watanabe M."/>
            <person name="Hiraoka S."/>
            <person name="Chiba Y."/>
            <person name="Ishida S."/>
            <person name="Ono Y."/>
            <person name="Takiguchi S."/>
            <person name="Watanabe S."/>
            <person name="Yosida M."/>
            <person name="Hotuta T."/>
            <person name="Kusano J."/>
            <person name="Kanehori K."/>
            <person name="Takahashi-Fujii A."/>
            <person name="Hara H."/>
            <person name="Tanase T.-O."/>
            <person name="Nomura Y."/>
            <person name="Togiya S."/>
            <person name="Komai F."/>
            <person name="Hara R."/>
            <person name="Takeuchi K."/>
            <person name="Arita M."/>
            <person name="Imose N."/>
            <person name="Musashino K."/>
            <person name="Yuuki H."/>
            <person name="Oshima A."/>
            <person name="Sasaki N."/>
            <person name="Aotsuka S."/>
            <person name="Yoshikawa Y."/>
            <person name="Matsunawa H."/>
            <person name="Ichihara T."/>
            <person name="Shiohata N."/>
            <person name="Sano S."/>
            <person name="Moriya S."/>
            <person name="Momiyama H."/>
            <person name="Satoh N."/>
            <person name="Takami S."/>
            <person name="Terashima Y."/>
            <person name="Suzuki O."/>
            <person name="Nakagawa S."/>
            <person name="Senoh A."/>
            <person name="Mizoguchi H."/>
            <person name="Goto Y."/>
            <person name="Shimizu F."/>
            <person name="Wakebe H."/>
            <person name="Hishigaki H."/>
            <person name="Watanabe T."/>
            <person name="Sugiyama A."/>
            <person name="Takemoto M."/>
            <person name="Kawakami B."/>
            <person name="Yamazaki M."/>
            <person name="Watanabe K."/>
            <person name="Kumagai A."/>
            <person name="Itakura S."/>
            <person name="Fukuzumi Y."/>
            <person name="Fujimori Y."/>
            <person name="Komiyama M."/>
            <person name="Tashiro H."/>
            <person name="Tanigami A."/>
            <person name="Fujiwara T."/>
            <person name="Ono T."/>
            <person name="Yamada K."/>
            <person name="Fujii Y."/>
            <person name="Ozaki K."/>
            <person name="Hirao M."/>
            <person name="Ohmori Y."/>
            <person name="Kawabata A."/>
            <person name="Hikiji T."/>
            <person name="Kobatake N."/>
            <person name="Inagaki H."/>
            <person name="Ikema Y."/>
            <person name="Okamoto S."/>
            <person name="Okitani R."/>
            <person name="Kawakami T."/>
            <person name="Noguchi S."/>
            <person name="Itoh T."/>
            <person name="Shigeta K."/>
            <person name="Senba T."/>
            <person name="Matsumura K."/>
            <person name="Nakajima Y."/>
            <person name="Mizuno T."/>
            <person name="Morinaga M."/>
            <person name="Sasaki M."/>
            <person name="Togashi T."/>
            <person name="Oyama M."/>
            <person name="Hata H."/>
            <person name="Watanabe M."/>
            <person name="Komatsu T."/>
            <person name="Mizushima-Sugano J."/>
            <person name="Satoh T."/>
            <person name="Shirai Y."/>
            <person name="Takahashi Y."/>
            <person name="Nakagawa K."/>
            <person name="Okumura K."/>
            <person name="Nagase T."/>
            <person name="Nomura N."/>
            <person name="Kikuchi H."/>
            <person name="Masuho Y."/>
            <person name="Yamashita R."/>
            <person name="Nakai K."/>
            <person name="Yada T."/>
            <person name="Nakamura Y."/>
            <person name="Ohara O."/>
            <person name="Isogai T."/>
            <person name="Sugano S."/>
        </authorList>
    </citation>
    <scope>NUCLEOTIDE SEQUENCE [LARGE SCALE MRNA] (ISOFORM 2)</scope>
</reference>
<reference key="5">
    <citation type="submission" date="2004-06" db="EMBL/GenBank/DDBJ databases">
        <title>Cloning of human full open reading frames in Gateway(TM) system entry vector (pDONR201).</title>
        <authorList>
            <person name="Halleck A."/>
            <person name="Ebert L."/>
            <person name="Mkoundinya M."/>
            <person name="Schick M."/>
            <person name="Eisenstein S."/>
            <person name="Neubert P."/>
            <person name="Kstrang K."/>
            <person name="Schatten R."/>
            <person name="Shen B."/>
            <person name="Henze S."/>
            <person name="Mar W."/>
            <person name="Korn B."/>
            <person name="Zuo D."/>
            <person name="Hu Y."/>
            <person name="LaBaer J."/>
        </authorList>
    </citation>
    <scope>NUCLEOTIDE SEQUENCE [LARGE SCALE MRNA] (ISOFORM 1)</scope>
</reference>
<reference key="6">
    <citation type="submission" date="2004-10" db="EMBL/GenBank/DDBJ databases">
        <title>Cloning of human full-length CDSs in BD Creator(TM) system donor vector.</title>
        <authorList>
            <person name="Kalnine N."/>
            <person name="Chen X."/>
            <person name="Rolfs A."/>
            <person name="Halleck A."/>
            <person name="Hines L."/>
            <person name="Eisenstein S."/>
            <person name="Koundinya M."/>
            <person name="Raphael J."/>
            <person name="Moreira D."/>
            <person name="Kelley T."/>
            <person name="LaBaer J."/>
            <person name="Lin Y."/>
            <person name="Phelan M."/>
            <person name="Farmer A."/>
        </authorList>
    </citation>
    <scope>NUCLEOTIDE SEQUENCE [LARGE SCALE MRNA] (ISOFORM 1)</scope>
</reference>
<reference key="7">
    <citation type="submission" date="2002-04" db="EMBL/GenBank/DDBJ databases">
        <authorList>
            <consortium name="NIEHS SNPs program"/>
        </authorList>
    </citation>
    <scope>NUCLEOTIDE SEQUENCE [GENOMIC DNA]</scope>
    <scope>VARIANTS LYS-147 AND GLU-221</scope>
</reference>
<reference key="8">
    <citation type="journal article" date="2003" name="Nature">
        <title>The DNA sequence of human chromosome 7.</title>
        <authorList>
            <person name="Hillier L.W."/>
            <person name="Fulton R.S."/>
            <person name="Fulton L.A."/>
            <person name="Graves T.A."/>
            <person name="Pepin K.H."/>
            <person name="Wagner-McPherson C."/>
            <person name="Layman D."/>
            <person name="Maas J."/>
            <person name="Jaeger S."/>
            <person name="Walker R."/>
            <person name="Wylie K."/>
            <person name="Sekhon M."/>
            <person name="Becker M.C."/>
            <person name="O'Laughlin M.D."/>
            <person name="Schaller M.E."/>
            <person name="Fewell G.A."/>
            <person name="Delehaunty K.D."/>
            <person name="Miner T.L."/>
            <person name="Nash W.E."/>
            <person name="Cordes M."/>
            <person name="Du H."/>
            <person name="Sun H."/>
            <person name="Edwards J."/>
            <person name="Bradshaw-Cordum H."/>
            <person name="Ali J."/>
            <person name="Andrews S."/>
            <person name="Isak A."/>
            <person name="Vanbrunt A."/>
            <person name="Nguyen C."/>
            <person name="Du F."/>
            <person name="Lamar B."/>
            <person name="Courtney L."/>
            <person name="Kalicki J."/>
            <person name="Ozersky P."/>
            <person name="Bielicki L."/>
            <person name="Scott K."/>
            <person name="Holmes A."/>
            <person name="Harkins R."/>
            <person name="Harris A."/>
            <person name="Strong C.M."/>
            <person name="Hou S."/>
            <person name="Tomlinson C."/>
            <person name="Dauphin-Kohlberg S."/>
            <person name="Kozlowicz-Reilly A."/>
            <person name="Leonard S."/>
            <person name="Rohlfing T."/>
            <person name="Rock S.M."/>
            <person name="Tin-Wollam A.-M."/>
            <person name="Abbott A."/>
            <person name="Minx P."/>
            <person name="Maupin R."/>
            <person name="Strowmatt C."/>
            <person name="Latreille P."/>
            <person name="Miller N."/>
            <person name="Johnson D."/>
            <person name="Murray J."/>
            <person name="Woessner J.P."/>
            <person name="Wendl M.C."/>
            <person name="Yang S.-P."/>
            <person name="Schultz B.R."/>
            <person name="Wallis J.W."/>
            <person name="Spieth J."/>
            <person name="Bieri T.A."/>
            <person name="Nelson J.O."/>
            <person name="Berkowicz N."/>
            <person name="Wohldmann P.E."/>
            <person name="Cook L.L."/>
            <person name="Hickenbotham M.T."/>
            <person name="Eldred J."/>
            <person name="Williams D."/>
            <person name="Bedell J.A."/>
            <person name="Mardis E.R."/>
            <person name="Clifton S.W."/>
            <person name="Chissoe S.L."/>
            <person name="Marra M.A."/>
            <person name="Raymond C."/>
            <person name="Haugen E."/>
            <person name="Gillett W."/>
            <person name="Zhou Y."/>
            <person name="James R."/>
            <person name="Phelps K."/>
            <person name="Iadanoto S."/>
            <person name="Bubb K."/>
            <person name="Simms E."/>
            <person name="Levy R."/>
            <person name="Clendenning J."/>
            <person name="Kaul R."/>
            <person name="Kent W.J."/>
            <person name="Furey T.S."/>
            <person name="Baertsch R.A."/>
            <person name="Brent M.R."/>
            <person name="Keibler E."/>
            <person name="Flicek P."/>
            <person name="Bork P."/>
            <person name="Suyama M."/>
            <person name="Bailey J.A."/>
            <person name="Portnoy M.E."/>
            <person name="Torrents D."/>
            <person name="Chinwalla A.T."/>
            <person name="Gish W.R."/>
            <person name="Eddy S.R."/>
            <person name="McPherson J.D."/>
            <person name="Olson M.V."/>
            <person name="Eichler E.E."/>
            <person name="Green E.D."/>
            <person name="Waterston R.H."/>
            <person name="Wilson R.K."/>
        </authorList>
    </citation>
    <scope>NUCLEOTIDE SEQUENCE [LARGE SCALE GENOMIC DNA]</scope>
</reference>
<reference key="9">
    <citation type="journal article" date="2004" name="Genome Res.">
        <title>The status, quality, and expansion of the NIH full-length cDNA project: the Mammalian Gene Collection (MGC).</title>
        <authorList>
            <consortium name="The MGC Project Team"/>
        </authorList>
    </citation>
    <scope>NUCLEOTIDE SEQUENCE [LARGE SCALE MRNA] (ISOFORM 1)</scope>
    <source>
        <tissue>Urinary bladder</tissue>
    </source>
</reference>
<reference key="10">
    <citation type="journal article" date="1999" name="Mol. Biol. Cell">
        <title>The human G2 checkpoint control protein hRAD9 is a nuclear phosphoprotein that forms complexes with hRAD1 and hHUS1.</title>
        <authorList>
            <person name="St Onge R.P."/>
            <person name="Udell C.M."/>
            <person name="Casselman R."/>
            <person name="Davey S."/>
        </authorList>
    </citation>
    <scope>INTERACTION WITH RAD1 AND RAD9A</scope>
</reference>
<reference key="11">
    <citation type="journal article" date="2000" name="J. Biol. Chem.">
        <title>HDAC1, a histone deacetylase, forms a complex with Hus1 and Rad9, two G2/M checkpoint Rad proteins.</title>
        <authorList>
            <person name="Cai R.L."/>
            <person name="Yan-Neale Y."/>
            <person name="Cueto M.A."/>
            <person name="Xu H."/>
            <person name="Cohen D."/>
        </authorList>
    </citation>
    <scope>IDENTIFICATION IN THE 9-1-1 COMPLEX ASSOCIATED WITH HDAC1</scope>
    <scope>INTERACTION WITH HDAC1</scope>
    <scope>SUBCELLULAR LOCATION</scope>
</reference>
<reference key="12">
    <citation type="journal article" date="2000" name="J. Biol. Chem.">
        <title>The human checkpoint protein hRad17 interacts with the PCNA-like proteins hRad1, hHus1, and hRad9.</title>
        <authorList>
            <person name="Rauen M."/>
            <person name="Burtelow M.A."/>
            <person name="Dufault V.M."/>
            <person name="Karnitz L.M."/>
        </authorList>
    </citation>
    <scope>IDENTIFICATION IN THE 9-1-1 COMPLEX ASSOCIATED WITH RAD17</scope>
</reference>
<reference key="13">
    <citation type="journal article" date="2000" name="Oncogene">
        <title>PCNA interacts with hHus1/hRad9 in response to DNA damage and replication inhibition.</title>
        <authorList>
            <person name="Komatsu K."/>
            <person name="Wharton W."/>
            <person name="Hang H."/>
            <person name="Wu C."/>
            <person name="Singh S."/>
            <person name="Lieberman H.B."/>
            <person name="Pledger W.J."/>
            <person name="Wang H.-G."/>
        </authorList>
    </citation>
    <scope>INTERACTION WITH PCNA</scope>
    <scope>SUBCELLULAR LOCATION</scope>
</reference>
<reference key="14">
    <citation type="journal article" date="2001" name="Biochem. Biophys. Res. Commun.">
        <title>The J domain of Tpr2 regulates its interaction with the proapoptotic and cell-cycle checkpoint protein, Rad9.</title>
        <authorList>
            <person name="Xiang S.L."/>
            <person name="Kumano T."/>
            <person name="Iwasaki S.I."/>
            <person name="Sun X."/>
            <person name="Yoshioka K."/>
            <person name="Yamamoto K.C."/>
        </authorList>
    </citation>
    <scope>INTERACTION WITH DNAJC7</scope>
</reference>
<reference key="15">
    <citation type="journal article" date="2003" name="Cancer Res.">
        <title>Expression of mammalian paralogues of HRAD9 and Mrad9 checkpoint control genes in normal and cancerous testicular tissue.</title>
        <authorList>
            <person name="Hopkins K.M."/>
            <person name="Wang X."/>
            <person name="Berlin A."/>
            <person name="Hang H."/>
            <person name="Thaker H.M."/>
            <person name="Lieberman H.B."/>
        </authorList>
    </citation>
    <scope>INTERACTION WITH RAD9B</scope>
</reference>
<reference key="16">
    <citation type="journal article" date="2003" name="Genomics">
        <title>Identification and characterization of RAD9B, a paralog of the RAD9 checkpoint gene.</title>
        <authorList>
            <person name="Dufault V.M."/>
            <person name="Oestreich A.J."/>
            <person name="Vroman B.T."/>
            <person name="Karnitz L.M."/>
        </authorList>
    </citation>
    <scope>INTERACTION WITH RAD9B</scope>
</reference>
<reference key="17">
    <citation type="journal article" date="2003" name="Proc. Natl. Acad. Sci. U.S.A.">
        <title>Loading of the human 9-1-1 checkpoint complex onto DNA by the checkpoint clamp loader hRad17-replication factor C complex in vitro.</title>
        <authorList>
            <person name="Bermudez V.P."/>
            <person name="Lindsey-Boltz L.A."/>
            <person name="Cesare A.J."/>
            <person name="Maniwa Y."/>
            <person name="Griffith J.D."/>
            <person name="Hurwitz J."/>
            <person name="Sancar A."/>
        </authorList>
    </citation>
    <scope>ASSOCIATION OF THE 9-1-1 COMPLEX WITH THE RAD17-RFC COMPLEX</scope>
    <scope>LACK OF INTERACTION WITH RAD17</scope>
    <scope>ELECTRON MICROSCOPY OF THE 9-1-1 AND RAD17-RFC COMPLEXES BOUND TO DNA</scope>
</reference>
<reference key="18">
    <citation type="journal article" date="2004" name="Nucleic Acids Res.">
        <title>The human Rad9/Rad1/Hus1 damage sensor clamp interacts with DNA polymerase beta and increases its DNA substrate utilisation efficiency: implications for DNA repair.</title>
        <authorList>
            <person name="Toueille M."/>
            <person name="El-Andaloussi N."/>
            <person name="Frouin I."/>
            <person name="Freire R."/>
            <person name="Funk D."/>
            <person name="Shevelev I."/>
            <person name="Friedrich-Heineken E."/>
            <person name="Villani G."/>
            <person name="Hottiger M.O."/>
            <person name="Huebscher U."/>
        </authorList>
    </citation>
    <scope>IDENTIFICATION IN THE 9-1-1 COMPLEX ASSOCIATED WITH POLB</scope>
    <scope>INTERACTION WITH POLB</scope>
</reference>
<reference key="19">
    <citation type="journal article" date="2004" name="Proc. Natl. Acad. Sci. U.S.A.">
        <title>The human Rad9-Rad1-Hus1 checkpoint complex stimulates flap endonuclease 1.</title>
        <authorList>
            <person name="Wang W."/>
            <person name="Brandt P."/>
            <person name="Rossi M.L."/>
            <person name="Lindsey-Boltz L."/>
            <person name="Podust V."/>
            <person name="Fanning E."/>
            <person name="Sancar A."/>
            <person name="Bambara R.A."/>
        </authorList>
    </citation>
    <scope>IDENTIFICATION IN THE 9-1-1 COMPLEX ASSOCIATED WITH FEN1</scope>
</reference>
<reference key="20">
    <citation type="journal article" date="2005" name="Biochem. J.">
        <title>The human checkpoint sensor and alternative DNA clamp Rad9-Rad1-Hus1 modulates the activity of DNA ligase I, a component of the long-patch base excision repair machinery.</title>
        <authorList>
            <person name="Smirnova E."/>
            <person name="Toueille M."/>
            <person name="Markkanen E."/>
            <person name="Huebscher U."/>
        </authorList>
    </citation>
    <scope>IDENTIFICATION IN THE 9-1-1 COMPLEX ASSOCIATED WITH LIG1</scope>
</reference>
<reference key="21">
    <citation type="journal article" date="2005" name="J. Mol. Biol.">
        <title>The two DNA clamps Rad9/Rad1/Hus1 complex and proliferating cell nuclear antigen differentially regulate flap endonuclease 1 activity.</title>
        <authorList>
            <person name="Friedrich-Heineken E."/>
            <person name="Toueille M."/>
            <person name="Taennler B."/>
            <person name="Buerki C."/>
            <person name="Ferrari E."/>
            <person name="Hottiger M.O."/>
            <person name="Huebscher U."/>
        </authorList>
    </citation>
    <scope>IDENTIFICATION IN THE 9-1-1 COMPLEX ASSOCIATED WITH FEN1</scope>
    <scope>INTERACTION WITH FEN1</scope>
</reference>
<reference key="22">
    <citation type="journal article" date="2005" name="Oncogene">
        <title>Interaction and colocalization of Rad9/Rad1/Hus1 checkpoint complex with replication protein A in human cells.</title>
        <authorList>
            <person name="Wu X."/>
            <person name="Shell S.M."/>
            <person name="Zou Y."/>
        </authorList>
    </citation>
    <scope>IDENTIFICATION IN THE 9-1-1 COMPLEX ASSOCIATED WITH RPA1 AND RPA2</scope>
</reference>
<reference key="23">
    <citation type="journal article" date="2011" name="Science">
        <title>A DNA damage response screen identifies RHINO, a 9-1-1 and TopBP1 interacting protein required for ATR signaling.</title>
        <authorList>
            <person name="Cotta-Ramusino C."/>
            <person name="McDonald E.R. III"/>
            <person name="Hurov K."/>
            <person name="Sowa M.E."/>
            <person name="Harper J.W."/>
            <person name="Elledge S.J."/>
        </authorList>
    </citation>
    <scope>FUNCTION</scope>
    <scope>IDENTIFICATION BY MASS SPECTROMETRY</scope>
</reference>
<reference evidence="20" key="24">
    <citation type="journal article" date="2020" name="J. Biol. Chem.">
        <title>Structure of the RAD9-RAD1-HUS1 checkpoint clamp bound to RHINO sheds light on the other side of the DNA clamp.</title>
        <authorList>
            <person name="Hara K."/>
            <person name="Iida N."/>
            <person name="Tamafune R."/>
            <person name="Ohashi E."/>
            <person name="Sakurai H."/>
            <person name="Ishikawa Y."/>
            <person name="Hishiki A."/>
            <person name="Hashimoto H."/>
        </authorList>
    </citation>
    <scope>X-RAY CRYSTALLOGRAPHY (2.40 ANGSTROMS) OF 2-280 IN COMPLEX WITH RHNO1; RAD1 AND RAD9A</scope>
    <scope>IDENTIFICATION IN THE 9-1-1 COMPLEX</scope>
</reference>
<reference evidence="21" key="25">
    <citation type="journal article" date="2023" name="J. Biol. Chem.">
        <title>The 9-1-1 DNA clamp subunit RAD1 forms specific interactions with clamp loader RAD17, revealing functional implications for binding-protein RHINO.</title>
        <authorList>
            <person name="Hara K."/>
            <person name="Hishiki A."/>
            <person name="Hoshino T."/>
            <person name="Nagata K."/>
            <person name="Iida N."/>
            <person name="Sawada Y."/>
            <person name="Ohashi E."/>
            <person name="Hashimoto H."/>
        </authorList>
    </citation>
    <scope>X-RAY CRYSTALLOGRAPHY (2.12 ANGSTROMS) OF 2-280 IN COMPLEX WITH RAD17; RAD1 AND RAD9A</scope>
</reference>
<accession>O60921</accession>
<accession>B4DFI9</accession>
<protein>
    <recommendedName>
        <fullName>Checkpoint protein HUS1</fullName>
        <shortName>hHUS1</shortName>
    </recommendedName>
</protein>